<dbReference type="EMBL" id="CU329670">
    <property type="protein sequence ID" value="CCD31329.1"/>
    <property type="molecule type" value="Genomic_DNA"/>
</dbReference>
<dbReference type="RefSeq" id="XP_004001784.1">
    <property type="nucleotide sequence ID" value="XM_004001735.1"/>
</dbReference>
<dbReference type="SMR" id="G2TRM7"/>
<dbReference type="STRING" id="284812.G2TRM7"/>
<dbReference type="PaxDb" id="4896-SPAC16E8.18c.1"/>
<dbReference type="EnsemblFungi" id="SPAC16E8.18c.1">
    <property type="protein sequence ID" value="SPAC16E8.18c.1:pep"/>
    <property type="gene ID" value="SPAC16E8.18c"/>
</dbReference>
<dbReference type="PomBase" id="SPAC16E8.18c">
    <property type="gene designation" value="tam5"/>
</dbReference>
<dbReference type="VEuPathDB" id="FungiDB:SPAC16E8.18c"/>
<dbReference type="HOGENOM" id="CLU_1687703_0_0_1"/>
<dbReference type="InParanoid" id="G2TRM7"/>
<dbReference type="PRO" id="PR:G2TRM7"/>
<dbReference type="Proteomes" id="UP000002485">
    <property type="component" value="Chromosome I"/>
</dbReference>
<keyword id="KW-1185">Reference proteome</keyword>
<sequence length="156" mass="18070">MSTNDHVLSLLQSLETREQLQKQLQIRSHEAFSLLLKNKSDFSVASLLSNQNSPTFKKPRISIAWVDPMFGKQQKRAVNLGTGDEEYQHLMFENAIFQKEPIPEGLIKSDSVCFHDTDVGFTNVLEQCLKLCQVNQKIVFLMQLIRNEQEKQREQF</sequence>
<feature type="chain" id="PRO_0000416514" description="Uncharacterized protein tam5">
    <location>
        <begin position="1"/>
        <end position="156"/>
    </location>
</feature>
<organism>
    <name type="scientific">Schizosaccharomyces pombe (strain 972 / ATCC 24843)</name>
    <name type="common">Fission yeast</name>
    <dbReference type="NCBI Taxonomy" id="284812"/>
    <lineage>
        <taxon>Eukaryota</taxon>
        <taxon>Fungi</taxon>
        <taxon>Dikarya</taxon>
        <taxon>Ascomycota</taxon>
        <taxon>Taphrinomycotina</taxon>
        <taxon>Schizosaccharomycetes</taxon>
        <taxon>Schizosaccharomycetales</taxon>
        <taxon>Schizosaccharomycetaceae</taxon>
        <taxon>Schizosaccharomyces</taxon>
    </lineage>
</organism>
<proteinExistence type="evidence at protein level"/>
<comment type="induction">
    <text evidence="1">Differentially expressed during meiosis.</text>
</comment>
<name>TAM5_SCHPO</name>
<gene>
    <name type="primary">tam5</name>
    <name type="ORF">SPAC16E8.18c</name>
</gene>
<reference key="1">
    <citation type="journal article" date="2002" name="Nature">
        <title>The genome sequence of Schizosaccharomyces pombe.</title>
        <authorList>
            <person name="Wood V."/>
            <person name="Gwilliam R."/>
            <person name="Rajandream M.A."/>
            <person name="Lyne M.H."/>
            <person name="Lyne R."/>
            <person name="Stewart A."/>
            <person name="Sgouros J.G."/>
            <person name="Peat N."/>
            <person name="Hayles J."/>
            <person name="Baker S.G."/>
            <person name="Basham D."/>
            <person name="Bowman S."/>
            <person name="Brooks K."/>
            <person name="Brown D."/>
            <person name="Brown S."/>
            <person name="Chillingworth T."/>
            <person name="Churcher C.M."/>
            <person name="Collins M."/>
            <person name="Connor R."/>
            <person name="Cronin A."/>
            <person name="Davis P."/>
            <person name="Feltwell T."/>
            <person name="Fraser A."/>
            <person name="Gentles S."/>
            <person name="Goble A."/>
            <person name="Hamlin N."/>
            <person name="Harris D.E."/>
            <person name="Hidalgo J."/>
            <person name="Hodgson G."/>
            <person name="Holroyd S."/>
            <person name="Hornsby T."/>
            <person name="Howarth S."/>
            <person name="Huckle E.J."/>
            <person name="Hunt S."/>
            <person name="Jagels K."/>
            <person name="James K.D."/>
            <person name="Jones L."/>
            <person name="Jones M."/>
            <person name="Leather S."/>
            <person name="McDonald S."/>
            <person name="McLean J."/>
            <person name="Mooney P."/>
            <person name="Moule S."/>
            <person name="Mungall K.L."/>
            <person name="Murphy L.D."/>
            <person name="Niblett D."/>
            <person name="Odell C."/>
            <person name="Oliver K."/>
            <person name="O'Neil S."/>
            <person name="Pearson D."/>
            <person name="Quail M.A."/>
            <person name="Rabbinowitsch E."/>
            <person name="Rutherford K.M."/>
            <person name="Rutter S."/>
            <person name="Saunders D."/>
            <person name="Seeger K."/>
            <person name="Sharp S."/>
            <person name="Skelton J."/>
            <person name="Simmonds M.N."/>
            <person name="Squares R."/>
            <person name="Squares S."/>
            <person name="Stevens K."/>
            <person name="Taylor K."/>
            <person name="Taylor R.G."/>
            <person name="Tivey A."/>
            <person name="Walsh S.V."/>
            <person name="Warren T."/>
            <person name="Whitehead S."/>
            <person name="Woodward J.R."/>
            <person name="Volckaert G."/>
            <person name="Aert R."/>
            <person name="Robben J."/>
            <person name="Grymonprez B."/>
            <person name="Weltjens I."/>
            <person name="Vanstreels E."/>
            <person name="Rieger M."/>
            <person name="Schaefer M."/>
            <person name="Mueller-Auer S."/>
            <person name="Gabel C."/>
            <person name="Fuchs M."/>
            <person name="Duesterhoeft A."/>
            <person name="Fritzc C."/>
            <person name="Holzer E."/>
            <person name="Moestl D."/>
            <person name="Hilbert H."/>
            <person name="Borzym K."/>
            <person name="Langer I."/>
            <person name="Beck A."/>
            <person name="Lehrach H."/>
            <person name="Reinhardt R."/>
            <person name="Pohl T.M."/>
            <person name="Eger P."/>
            <person name="Zimmermann W."/>
            <person name="Wedler H."/>
            <person name="Wambutt R."/>
            <person name="Purnelle B."/>
            <person name="Goffeau A."/>
            <person name="Cadieu E."/>
            <person name="Dreano S."/>
            <person name="Gloux S."/>
            <person name="Lelaure V."/>
            <person name="Mottier S."/>
            <person name="Galibert F."/>
            <person name="Aves S.J."/>
            <person name="Xiang Z."/>
            <person name="Hunt C."/>
            <person name="Moore K."/>
            <person name="Hurst S.M."/>
            <person name="Lucas M."/>
            <person name="Rochet M."/>
            <person name="Gaillardin C."/>
            <person name="Tallada V.A."/>
            <person name="Garzon A."/>
            <person name="Thode G."/>
            <person name="Daga R.R."/>
            <person name="Cruzado L."/>
            <person name="Jimenez J."/>
            <person name="Sanchez M."/>
            <person name="del Rey F."/>
            <person name="Benito J."/>
            <person name="Dominguez A."/>
            <person name="Revuelta J.L."/>
            <person name="Moreno S."/>
            <person name="Armstrong J."/>
            <person name="Forsburg S.L."/>
            <person name="Cerutti L."/>
            <person name="Lowe T."/>
            <person name="McCombie W.R."/>
            <person name="Paulsen I."/>
            <person name="Potashkin J."/>
            <person name="Shpakovski G.V."/>
            <person name="Ussery D."/>
            <person name="Barrell B.G."/>
            <person name="Nurse P."/>
        </authorList>
    </citation>
    <scope>NUCLEOTIDE SEQUENCE [LARGE SCALE GENOMIC DNA]</scope>
    <source>
        <strain>972 / ATCC 24843</strain>
    </source>
</reference>
<reference key="2">
    <citation type="journal article" date="2011" name="Genetics">
        <title>Augmented annotation of the Schizosaccharomyces pombe genome reveals additional genes required for growth and viability.</title>
        <authorList>
            <person name="Bitton D.A."/>
            <person name="Wood V."/>
            <person name="Scutt P.J."/>
            <person name="Grallert A."/>
            <person name="Yates T."/>
            <person name="Smith D.L."/>
            <person name="Hagan I.M."/>
            <person name="Miller C.J."/>
        </authorList>
    </citation>
    <scope>IDENTIFICATION BY MASS SPECTROMETRY</scope>
    <scope>INDUCTION</scope>
</reference>
<accession>G2TRM7</accession>
<evidence type="ECO:0000269" key="1">
    <source>
    </source>
</evidence>
<protein>
    <recommendedName>
        <fullName>Uncharacterized protein tam5</fullName>
    </recommendedName>
    <alternativeName>
        <fullName>Transcripts altered in meiosis protein 5</fullName>
    </alternativeName>
</protein>